<organism>
    <name type="scientific">Saccharomyces cerevisiae (strain ATCC 204508 / S288c)</name>
    <name type="common">Baker's yeast</name>
    <dbReference type="NCBI Taxonomy" id="559292"/>
    <lineage>
        <taxon>Eukaryota</taxon>
        <taxon>Fungi</taxon>
        <taxon>Dikarya</taxon>
        <taxon>Ascomycota</taxon>
        <taxon>Saccharomycotina</taxon>
        <taxon>Saccharomycetes</taxon>
        <taxon>Saccharomycetales</taxon>
        <taxon>Saccharomycetaceae</taxon>
        <taxon>Saccharomyces</taxon>
    </lineage>
</organism>
<feature type="chain" id="PRO_0000204911" description="Nucleoporin POM34">
    <location>
        <begin position="1"/>
        <end position="299"/>
    </location>
</feature>
<feature type="transmembrane region" description="Helical" evidence="1">
    <location>
        <begin position="64"/>
        <end position="84"/>
    </location>
</feature>
<feature type="transmembrane region" description="Helical" evidence="1">
    <location>
        <begin position="133"/>
        <end position="153"/>
    </location>
</feature>
<feature type="region of interest" description="Disordered" evidence="2">
    <location>
        <begin position="1"/>
        <end position="39"/>
    </location>
</feature>
<feature type="compositionally biased region" description="Polar residues" evidence="2">
    <location>
        <begin position="25"/>
        <end position="34"/>
    </location>
</feature>
<feature type="modified residue" description="Phosphoserine" evidence="8">
    <location>
        <position position="270"/>
    </location>
</feature>
<feature type="modified residue" description="Phosphothreonine" evidence="8">
    <location>
        <position position="273"/>
    </location>
</feature>
<feature type="modified residue" description="Phosphoserine" evidence="8">
    <location>
        <position position="292"/>
    </location>
</feature>
<feature type="modified residue" description="Phosphoserine" evidence="5 6 7 8">
    <location>
        <position position="294"/>
    </location>
</feature>
<feature type="sequence conflict" description="In Ref. 4; AAS56272." evidence="4" ref="4">
    <original>S</original>
    <variation>P</variation>
    <location>
        <position position="191"/>
    </location>
</feature>
<accession>Q12445</accession>
<accession>D6VY20</accession>
<accession>E9P8U3</accession>
<accession>Q7LGY6</accession>
<name>POM34_YEAST</name>
<reference key="1">
    <citation type="submission" date="1995-09" db="EMBL/GenBank/DDBJ databases">
        <title>A 7.8kb fragment from chromosome XII of Saccharomyces cerevisiae does not harbour PKC2.</title>
        <authorList>
            <person name="Saville S.P."/>
            <person name="Atkinson S."/>
            <person name="Jamieson L."/>
            <person name="Pocklington M.J."/>
            <person name="Orr E."/>
        </authorList>
    </citation>
    <scope>NUCLEOTIDE SEQUENCE [GENOMIC DNA]</scope>
    <source>
        <strain>ATCC 204508 / S288c</strain>
    </source>
</reference>
<reference key="2">
    <citation type="journal article" date="1997" name="Nature">
        <title>The nucleotide sequence of Saccharomyces cerevisiae chromosome XII.</title>
        <authorList>
            <person name="Johnston M."/>
            <person name="Hillier L.W."/>
            <person name="Riles L."/>
            <person name="Albermann K."/>
            <person name="Andre B."/>
            <person name="Ansorge W."/>
            <person name="Benes V."/>
            <person name="Brueckner M."/>
            <person name="Delius H."/>
            <person name="Dubois E."/>
            <person name="Duesterhoeft A."/>
            <person name="Entian K.-D."/>
            <person name="Floeth M."/>
            <person name="Goffeau A."/>
            <person name="Hebling U."/>
            <person name="Heumann K."/>
            <person name="Heuss-Neitzel D."/>
            <person name="Hilbert H."/>
            <person name="Hilger F."/>
            <person name="Kleine K."/>
            <person name="Koetter P."/>
            <person name="Louis E.J."/>
            <person name="Messenguy F."/>
            <person name="Mewes H.-W."/>
            <person name="Miosga T."/>
            <person name="Moestl D."/>
            <person name="Mueller-Auer S."/>
            <person name="Nentwich U."/>
            <person name="Obermaier B."/>
            <person name="Piravandi E."/>
            <person name="Pohl T.M."/>
            <person name="Portetelle D."/>
            <person name="Purnelle B."/>
            <person name="Rechmann S."/>
            <person name="Rieger M."/>
            <person name="Rinke M."/>
            <person name="Rose M."/>
            <person name="Scharfe M."/>
            <person name="Scherens B."/>
            <person name="Scholler P."/>
            <person name="Schwager C."/>
            <person name="Schwarz S."/>
            <person name="Underwood A.P."/>
            <person name="Urrestarazu L.A."/>
            <person name="Vandenbol M."/>
            <person name="Verhasselt P."/>
            <person name="Vierendeels F."/>
            <person name="Voet M."/>
            <person name="Volckaert G."/>
            <person name="Voss H."/>
            <person name="Wambutt R."/>
            <person name="Wedler E."/>
            <person name="Wedler H."/>
            <person name="Zimmermann F.K."/>
            <person name="Zollner A."/>
            <person name="Hani J."/>
            <person name="Hoheisel J.D."/>
        </authorList>
    </citation>
    <scope>NUCLEOTIDE SEQUENCE [LARGE SCALE GENOMIC DNA]</scope>
    <source>
        <strain>ATCC 204508 / S288c</strain>
    </source>
</reference>
<reference key="3">
    <citation type="journal article" date="2014" name="G3 (Bethesda)">
        <title>The reference genome sequence of Saccharomyces cerevisiae: Then and now.</title>
        <authorList>
            <person name="Engel S.R."/>
            <person name="Dietrich F.S."/>
            <person name="Fisk D.G."/>
            <person name="Binkley G."/>
            <person name="Balakrishnan R."/>
            <person name="Costanzo M.C."/>
            <person name="Dwight S.S."/>
            <person name="Hitz B.C."/>
            <person name="Karra K."/>
            <person name="Nash R.S."/>
            <person name="Weng S."/>
            <person name="Wong E.D."/>
            <person name="Lloyd P."/>
            <person name="Skrzypek M.S."/>
            <person name="Miyasato S.R."/>
            <person name="Simison M."/>
            <person name="Cherry J.M."/>
        </authorList>
    </citation>
    <scope>GENOME REANNOTATION</scope>
    <source>
        <strain>ATCC 204508 / S288c</strain>
    </source>
</reference>
<reference key="4">
    <citation type="journal article" date="2007" name="Genome Res.">
        <title>Approaching a complete repository of sequence-verified protein-encoding clones for Saccharomyces cerevisiae.</title>
        <authorList>
            <person name="Hu Y."/>
            <person name="Rolfs A."/>
            <person name="Bhullar B."/>
            <person name="Murthy T.V.S."/>
            <person name="Zhu C."/>
            <person name="Berger M.F."/>
            <person name="Camargo A.A."/>
            <person name="Kelley F."/>
            <person name="McCarron S."/>
            <person name="Jepson D."/>
            <person name="Richardson A."/>
            <person name="Raphael J."/>
            <person name="Moreira D."/>
            <person name="Taycher E."/>
            <person name="Zuo D."/>
            <person name="Mohr S."/>
            <person name="Kane M.F."/>
            <person name="Williamson J."/>
            <person name="Simpson A.J.G."/>
            <person name="Bulyk M.L."/>
            <person name="Harlow E."/>
            <person name="Marsischky G."/>
            <person name="Kolodner R.D."/>
            <person name="LaBaer J."/>
        </authorList>
    </citation>
    <scope>NUCLEOTIDE SEQUENCE [GENOMIC DNA]</scope>
    <source>
        <strain>ATCC 204508 / S288c</strain>
    </source>
</reference>
<reference key="5">
    <citation type="journal article" date="2000" name="J. Cell Biol.">
        <title>The yeast nuclear pore complex: composition, architecture, and transport mechanism.</title>
        <authorList>
            <person name="Rout M.P."/>
            <person name="Aitchison J.D."/>
            <person name="Suprapto A."/>
            <person name="Hjertaas K."/>
            <person name="Zhao Y."/>
            <person name="Chait B.T."/>
        </authorList>
    </citation>
    <scope>FUNCTION</scope>
    <scope>IDENTIFICATION IN THE NUCLEAR PORE COMPLEX</scope>
    <scope>SUBCELLULAR LOCATION</scope>
</reference>
<reference key="6">
    <citation type="journal article" date="2003" name="Dev. Cell">
        <title>Peering through the pore: nuclear pore complex structure, assembly, and function.</title>
        <authorList>
            <person name="Suntharalingam M."/>
            <person name="Wente S.R."/>
        </authorList>
    </citation>
    <scope>REVIEW</scope>
</reference>
<reference key="7">
    <citation type="journal article" date="2005" name="Mol. Cell. Proteomics">
        <title>Quantitative phosphoproteomics applied to the yeast pheromone signaling pathway.</title>
        <authorList>
            <person name="Gruhler A."/>
            <person name="Olsen J.V."/>
            <person name="Mohammed S."/>
            <person name="Mortensen P."/>
            <person name="Faergeman N.J."/>
            <person name="Mann M."/>
            <person name="Jensen O.N."/>
        </authorList>
    </citation>
    <scope>PHOSPHORYLATION [LARGE SCALE ANALYSIS] AT SER-294</scope>
    <scope>IDENTIFICATION BY MASS SPECTROMETRY [LARGE SCALE ANALYSIS]</scope>
    <source>
        <strain>YAL6B</strain>
    </source>
</reference>
<reference key="8">
    <citation type="journal article" date="2007" name="J. Proteome Res.">
        <title>Large-scale phosphorylation analysis of alpha-factor-arrested Saccharomyces cerevisiae.</title>
        <authorList>
            <person name="Li X."/>
            <person name="Gerber S.A."/>
            <person name="Rudner A.D."/>
            <person name="Beausoleil S.A."/>
            <person name="Haas W."/>
            <person name="Villen J."/>
            <person name="Elias J.E."/>
            <person name="Gygi S.P."/>
        </authorList>
    </citation>
    <scope>IDENTIFICATION BY MASS SPECTROMETRY [LARGE SCALE ANALYSIS]</scope>
    <source>
        <strain>ADR376</strain>
    </source>
</reference>
<reference key="9">
    <citation type="journal article" date="2007" name="Proc. Natl. Acad. Sci. U.S.A.">
        <title>Analysis of phosphorylation sites on proteins from Saccharomyces cerevisiae by electron transfer dissociation (ETD) mass spectrometry.</title>
        <authorList>
            <person name="Chi A."/>
            <person name="Huttenhower C."/>
            <person name="Geer L.Y."/>
            <person name="Coon J.J."/>
            <person name="Syka J.E.P."/>
            <person name="Bai D.L."/>
            <person name="Shabanowitz J."/>
            <person name="Burke D.J."/>
            <person name="Troyanskaya O.G."/>
            <person name="Hunt D.F."/>
        </authorList>
    </citation>
    <scope>PHOSPHORYLATION [LARGE SCALE ANALYSIS] AT SER-294</scope>
    <scope>IDENTIFICATION BY MASS SPECTROMETRY [LARGE SCALE ANALYSIS]</scope>
</reference>
<reference key="10">
    <citation type="journal article" date="2008" name="Mol. Cell. Proteomics">
        <title>A multidimensional chromatography technology for in-depth phosphoproteome analysis.</title>
        <authorList>
            <person name="Albuquerque C.P."/>
            <person name="Smolka M.B."/>
            <person name="Payne S.H."/>
            <person name="Bafna V."/>
            <person name="Eng J."/>
            <person name="Zhou H."/>
        </authorList>
    </citation>
    <scope>PHOSPHORYLATION [LARGE SCALE ANALYSIS] AT SER-294</scope>
    <scope>IDENTIFICATION BY MASS SPECTROMETRY [LARGE SCALE ANALYSIS]</scope>
</reference>
<reference key="11">
    <citation type="journal article" date="2009" name="Science">
        <title>Global analysis of Cdk1 substrate phosphorylation sites provides insights into evolution.</title>
        <authorList>
            <person name="Holt L.J."/>
            <person name="Tuch B.B."/>
            <person name="Villen J."/>
            <person name="Johnson A.D."/>
            <person name="Gygi S.P."/>
            <person name="Morgan D.O."/>
        </authorList>
    </citation>
    <scope>PHOSPHORYLATION [LARGE SCALE ANALYSIS] AT SER-270; THR-273; SER-292 AND SER-294</scope>
    <scope>IDENTIFICATION BY MASS SPECTROMETRY [LARGE SCALE ANALYSIS]</scope>
</reference>
<comment type="function">
    <text evidence="3">Functions as a component of the nuclear pore complex (NPC). NPC components, collectively referred to as nucleoporins (NUPs), can play the role of both NPC structural components and of docking or interaction partners for transiently associated nuclear transport factors.</text>
</comment>
<comment type="subunit">
    <text evidence="3">Component of the nuclear pore complex (NPC). NPC constitutes the exclusive means of nucleocytoplasmic transport. NPCs allow the passive diffusion of ions and small molecules and the active, nuclear transport receptor-mediated bidirectional transport of macromolecules such as proteins, RNAs, ribonucleoparticles (RNPs), and ribosomal subunits across the nuclear envelope. Due to its 8-fold rotational symmetry, all subunits are present with 8 copies or multiples thereof.</text>
</comment>
<comment type="subcellular location">
    <subcellularLocation>
        <location evidence="3">Nucleus</location>
        <location evidence="3">Nuclear pore complex</location>
    </subcellularLocation>
    <subcellularLocation>
        <location>Nucleus membrane</location>
        <topology>Multi-pass membrane protein</topology>
    </subcellularLocation>
    <text>Central core structure of the nuclear pore complex.</text>
</comment>
<dbReference type="EMBL" id="X90564">
    <property type="protein sequence ID" value="CAA62155.1"/>
    <property type="molecule type" value="Genomic_DNA"/>
</dbReference>
<dbReference type="EMBL" id="Z73191">
    <property type="protein sequence ID" value="CAA97542.1"/>
    <property type="molecule type" value="Genomic_DNA"/>
</dbReference>
<dbReference type="EMBL" id="Z73190">
    <property type="protein sequence ID" value="CAA97540.1"/>
    <property type="molecule type" value="Genomic_DNA"/>
</dbReference>
<dbReference type="EMBL" id="AY557946">
    <property type="protein sequence ID" value="AAS56272.1"/>
    <property type="molecule type" value="Genomic_DNA"/>
</dbReference>
<dbReference type="EMBL" id="BK006945">
    <property type="protein sequence ID" value="DAA09336.1"/>
    <property type="molecule type" value="Genomic_DNA"/>
</dbReference>
<dbReference type="PIR" id="S64840">
    <property type="entry name" value="S64840"/>
</dbReference>
<dbReference type="RefSeq" id="NP_013118.1">
    <property type="nucleotide sequence ID" value="NM_001181905.1"/>
</dbReference>
<dbReference type="PDB" id="8T9L">
    <property type="method" value="EM"/>
    <property type="resolution" value="7.00 A"/>
    <property type="chains" value="A/C=1-299"/>
</dbReference>
<dbReference type="PDBsum" id="8T9L"/>
<dbReference type="EMDB" id="EMD-41117"/>
<dbReference type="SMR" id="Q12445"/>
<dbReference type="BioGRID" id="31292">
    <property type="interactions" value="236"/>
</dbReference>
<dbReference type="ComplexPortal" id="CPX-824">
    <property type="entry name" value="Nuclear pore complex"/>
</dbReference>
<dbReference type="DIP" id="DIP-8961N"/>
<dbReference type="FunCoup" id="Q12445">
    <property type="interactions" value="147"/>
</dbReference>
<dbReference type="IntAct" id="Q12445">
    <property type="interactions" value="14"/>
</dbReference>
<dbReference type="MINT" id="Q12445"/>
<dbReference type="STRING" id="4932.YLR018C"/>
<dbReference type="TCDB" id="1.I.1.1.1">
    <property type="family name" value="the nuclear pore complex (npc) family"/>
</dbReference>
<dbReference type="iPTMnet" id="Q12445"/>
<dbReference type="PaxDb" id="4932-YLR018C"/>
<dbReference type="PeptideAtlas" id="Q12445"/>
<dbReference type="EnsemblFungi" id="YLR018C_mRNA">
    <property type="protein sequence ID" value="YLR018C"/>
    <property type="gene ID" value="YLR018C"/>
</dbReference>
<dbReference type="GeneID" id="850705"/>
<dbReference type="KEGG" id="sce:YLR018C"/>
<dbReference type="AGR" id="SGD:S000004008"/>
<dbReference type="SGD" id="S000004008">
    <property type="gene designation" value="POM34"/>
</dbReference>
<dbReference type="VEuPathDB" id="FungiDB:YLR018C"/>
<dbReference type="eggNOG" id="ENOG502S0GN">
    <property type="taxonomic scope" value="Eukaryota"/>
</dbReference>
<dbReference type="HOGENOM" id="CLU_043443_0_0_1"/>
<dbReference type="InParanoid" id="Q12445"/>
<dbReference type="OMA" id="SSKYTYM"/>
<dbReference type="OrthoDB" id="4035020at2759"/>
<dbReference type="BioCyc" id="YEAST:G3O-32179-MONOMER"/>
<dbReference type="BioGRID-ORCS" id="850705">
    <property type="hits" value="1 hit in 10 CRISPR screens"/>
</dbReference>
<dbReference type="PRO" id="PR:Q12445"/>
<dbReference type="Proteomes" id="UP000002311">
    <property type="component" value="Chromosome XII"/>
</dbReference>
<dbReference type="RNAct" id="Q12445">
    <property type="molecule type" value="protein"/>
</dbReference>
<dbReference type="GO" id="GO:0005635">
    <property type="term" value="C:nuclear envelope"/>
    <property type="evidence" value="ECO:0000303"/>
    <property type="project" value="ComplexPortal"/>
</dbReference>
<dbReference type="GO" id="GO:0005640">
    <property type="term" value="C:nuclear outer membrane"/>
    <property type="evidence" value="ECO:0000314"/>
    <property type="project" value="SGD"/>
</dbReference>
<dbReference type="GO" id="GO:0034399">
    <property type="term" value="C:nuclear periphery"/>
    <property type="evidence" value="ECO:0007005"/>
    <property type="project" value="SGD"/>
</dbReference>
<dbReference type="GO" id="GO:0005643">
    <property type="term" value="C:nuclear pore"/>
    <property type="evidence" value="ECO:0000314"/>
    <property type="project" value="SGD"/>
</dbReference>
<dbReference type="GO" id="GO:0070762">
    <property type="term" value="C:nuclear pore transmembrane ring"/>
    <property type="evidence" value="ECO:0000314"/>
    <property type="project" value="SGD"/>
</dbReference>
<dbReference type="GO" id="GO:0017056">
    <property type="term" value="F:structural constituent of nuclear pore"/>
    <property type="evidence" value="ECO:0000305"/>
    <property type="project" value="SGD"/>
</dbReference>
<dbReference type="GO" id="GO:0051028">
    <property type="term" value="P:mRNA transport"/>
    <property type="evidence" value="ECO:0007669"/>
    <property type="project" value="UniProtKB-KW"/>
</dbReference>
<dbReference type="GO" id="GO:0006999">
    <property type="term" value="P:nuclear pore organization"/>
    <property type="evidence" value="ECO:0000316"/>
    <property type="project" value="SGD"/>
</dbReference>
<dbReference type="GO" id="GO:0006913">
    <property type="term" value="P:nucleocytoplasmic transport"/>
    <property type="evidence" value="ECO:0000315"/>
    <property type="project" value="SGD"/>
</dbReference>
<dbReference type="GO" id="GO:0006606">
    <property type="term" value="P:protein import into nucleus"/>
    <property type="evidence" value="ECO:0000316"/>
    <property type="project" value="SGD"/>
</dbReference>
<dbReference type="GO" id="GO:0030474">
    <property type="term" value="P:spindle pole body duplication"/>
    <property type="evidence" value="ECO:0000316"/>
    <property type="project" value="SGD"/>
</dbReference>
<dbReference type="InterPro" id="IPR012578">
    <property type="entry name" value="Nucl_pore_cmplx"/>
</dbReference>
<dbReference type="PANTHER" id="PTHR28003">
    <property type="entry name" value="NUCLEOPORIN POM34"/>
    <property type="match status" value="1"/>
</dbReference>
<dbReference type="PANTHER" id="PTHR28003:SF1">
    <property type="entry name" value="NUCLEOPORIN POM34"/>
    <property type="match status" value="1"/>
</dbReference>
<dbReference type="Pfam" id="PF08058">
    <property type="entry name" value="NPCC"/>
    <property type="match status" value="1"/>
</dbReference>
<keyword id="KW-0002">3D-structure</keyword>
<keyword id="KW-0472">Membrane</keyword>
<keyword id="KW-0509">mRNA transport</keyword>
<keyword id="KW-0906">Nuclear pore complex</keyword>
<keyword id="KW-0539">Nucleus</keyword>
<keyword id="KW-0597">Phosphoprotein</keyword>
<keyword id="KW-0653">Protein transport</keyword>
<keyword id="KW-1185">Reference proteome</keyword>
<keyword id="KW-0811">Translocation</keyword>
<keyword id="KW-0812">Transmembrane</keyword>
<keyword id="KW-1133">Transmembrane helix</keyword>
<keyword id="KW-0813">Transport</keyword>
<gene>
    <name type="primary">POM34</name>
    <name type="ordered locus">YLR018C</name>
</gene>
<evidence type="ECO:0000255" key="1"/>
<evidence type="ECO:0000256" key="2">
    <source>
        <dbReference type="SAM" id="MobiDB-lite"/>
    </source>
</evidence>
<evidence type="ECO:0000269" key="3">
    <source>
    </source>
</evidence>
<evidence type="ECO:0000305" key="4"/>
<evidence type="ECO:0007744" key="5">
    <source>
    </source>
</evidence>
<evidence type="ECO:0007744" key="6">
    <source>
    </source>
</evidence>
<evidence type="ECO:0007744" key="7">
    <source>
    </source>
</evidence>
<evidence type="ECO:0007744" key="8">
    <source>
    </source>
</evidence>
<protein>
    <recommendedName>
        <fullName>Nucleoporin POM34</fullName>
    </recommendedName>
    <alternativeName>
        <fullName>Nuclear pore protein POM34</fullName>
    </alternativeName>
    <alternativeName>
        <fullName>Pore membrane protein POM34</fullName>
    </alternativeName>
</protein>
<sequence>MKIQAGQLGLDDNDVPGPLPDTDSKPSSQSQNDTPMFKLGNFESPVLKELSRRTVNKEMETQRIMTNVIAFAFWNLLVKFIKFFWNNTHVGRQFCNRLSRIHLYMLTFHTLKKANIIYHTTFSWLNAELLDYLFHLLISLNILFSLWKLLSTVKVSDLNLTDRQKKLLGVDMQSSVDTGLQPQHPHYVSTSKISQMAQNKTHIPQTNLKNHPAYLFKGLETPLKARQREMAEEQTKLQSQSLHTKNVFGTLQRHSGISSTLVSANNDNNSPHTPVTRKGYIPSSKYAYMMNSQSPRGKI</sequence>
<proteinExistence type="evidence at protein level"/>